<gene>
    <name type="ordered locus">KPK_3478</name>
</gene>
<evidence type="ECO:0000255" key="1">
    <source>
        <dbReference type="HAMAP-Rule" id="MF_01584"/>
    </source>
</evidence>
<proteinExistence type="inferred from homology"/>
<protein>
    <recommendedName>
        <fullName evidence="1">UPF0502 protein KPK_3478</fullName>
    </recommendedName>
</protein>
<sequence>MKYQLTAHEARVIGCLLEKQVTTPEQYPLSVNAVVTACNQKTNREPVMSLSEGEVQTLLDTLVKRHYLRTVSGFGNRVTKYEQRFCNSEFGDLKLSAGEVAVVTTLLLRGAQTPGELRSRAQRMHEFSDMAEVESVLEGLATREDGPFVARLPREPGKRESRYMHLFCDDMDTLITTVEALSPLEDDDDLRARVEALEGEVAELKARLDSLLHHLGD</sequence>
<dbReference type="EMBL" id="CP000964">
    <property type="protein sequence ID" value="ACI09485.1"/>
    <property type="molecule type" value="Genomic_DNA"/>
</dbReference>
<dbReference type="SMR" id="B5XXJ0"/>
<dbReference type="KEGG" id="kpe:KPK_3478"/>
<dbReference type="HOGENOM" id="CLU_057831_2_0_6"/>
<dbReference type="BioCyc" id="KPNE507522:GI0B-3461-MONOMER"/>
<dbReference type="Proteomes" id="UP000001734">
    <property type="component" value="Chromosome"/>
</dbReference>
<dbReference type="FunFam" id="1.10.10.10:FF:000196">
    <property type="entry name" value="UPF0502 protein YceH"/>
    <property type="match status" value="1"/>
</dbReference>
<dbReference type="Gene3D" id="1.10.10.10">
    <property type="entry name" value="Winged helix-like DNA-binding domain superfamily/Winged helix DNA-binding domain"/>
    <property type="match status" value="2"/>
</dbReference>
<dbReference type="HAMAP" id="MF_01584">
    <property type="entry name" value="UPF0502"/>
    <property type="match status" value="1"/>
</dbReference>
<dbReference type="InterPro" id="IPR007432">
    <property type="entry name" value="DUF480"/>
</dbReference>
<dbReference type="InterPro" id="IPR036388">
    <property type="entry name" value="WH-like_DNA-bd_sf"/>
</dbReference>
<dbReference type="InterPro" id="IPR036390">
    <property type="entry name" value="WH_DNA-bd_sf"/>
</dbReference>
<dbReference type="NCBIfam" id="NF008413">
    <property type="entry name" value="PRK11239.1"/>
    <property type="match status" value="1"/>
</dbReference>
<dbReference type="PANTHER" id="PTHR38768">
    <property type="entry name" value="UPF0502 PROTEIN YCEH"/>
    <property type="match status" value="1"/>
</dbReference>
<dbReference type="PANTHER" id="PTHR38768:SF1">
    <property type="entry name" value="UPF0502 PROTEIN YCEH"/>
    <property type="match status" value="1"/>
</dbReference>
<dbReference type="Pfam" id="PF04337">
    <property type="entry name" value="DUF480"/>
    <property type="match status" value="1"/>
</dbReference>
<dbReference type="SUPFAM" id="SSF46785">
    <property type="entry name" value="Winged helix' DNA-binding domain"/>
    <property type="match status" value="2"/>
</dbReference>
<reference key="1">
    <citation type="journal article" date="2008" name="PLoS Genet.">
        <title>Complete genome sequence of the N2-fixing broad host range endophyte Klebsiella pneumoniae 342 and virulence predictions verified in mice.</title>
        <authorList>
            <person name="Fouts D.E."/>
            <person name="Tyler H.L."/>
            <person name="DeBoy R.T."/>
            <person name="Daugherty S."/>
            <person name="Ren Q."/>
            <person name="Badger J.H."/>
            <person name="Durkin A.S."/>
            <person name="Huot H."/>
            <person name="Shrivastava S."/>
            <person name="Kothari S."/>
            <person name="Dodson R.J."/>
            <person name="Mohamoud Y."/>
            <person name="Khouri H."/>
            <person name="Roesch L.F.W."/>
            <person name="Krogfelt K.A."/>
            <person name="Struve C."/>
            <person name="Triplett E.W."/>
            <person name="Methe B.A."/>
        </authorList>
    </citation>
    <scope>NUCLEOTIDE SEQUENCE [LARGE SCALE GENOMIC DNA]</scope>
    <source>
        <strain>342</strain>
    </source>
</reference>
<name>Y3478_KLEP3</name>
<comment type="similarity">
    <text evidence="1">Belongs to the UPF0502 family.</text>
</comment>
<feature type="chain" id="PRO_1000201247" description="UPF0502 protein KPK_3478">
    <location>
        <begin position="1"/>
        <end position="217"/>
    </location>
</feature>
<organism>
    <name type="scientific">Klebsiella pneumoniae (strain 342)</name>
    <dbReference type="NCBI Taxonomy" id="507522"/>
    <lineage>
        <taxon>Bacteria</taxon>
        <taxon>Pseudomonadati</taxon>
        <taxon>Pseudomonadota</taxon>
        <taxon>Gammaproteobacteria</taxon>
        <taxon>Enterobacterales</taxon>
        <taxon>Enterobacteriaceae</taxon>
        <taxon>Klebsiella/Raoultella group</taxon>
        <taxon>Klebsiella</taxon>
        <taxon>Klebsiella pneumoniae complex</taxon>
    </lineage>
</organism>
<accession>B5XXJ0</accession>